<name>BOT2_BOTFU</name>
<organism>
    <name type="scientific">Botryotinia fuckeliana</name>
    <name type="common">Noble rot fungus</name>
    <name type="synonym">Botrytis cinerea</name>
    <dbReference type="NCBI Taxonomy" id="40559"/>
    <lineage>
        <taxon>Eukaryota</taxon>
        <taxon>Fungi</taxon>
        <taxon>Dikarya</taxon>
        <taxon>Ascomycota</taxon>
        <taxon>Pezizomycotina</taxon>
        <taxon>Leotiomycetes</taxon>
        <taxon>Helotiales</taxon>
        <taxon>Sclerotiniaceae</taxon>
        <taxon>Botrytis</taxon>
    </lineage>
</organism>
<evidence type="ECO:0000250" key="1"/>
<evidence type="ECO:0000250" key="2">
    <source>
        <dbReference type="UniProtKB" id="Q9UR08"/>
    </source>
</evidence>
<evidence type="ECO:0000256" key="3">
    <source>
        <dbReference type="SAM" id="MobiDB-lite"/>
    </source>
</evidence>
<evidence type="ECO:0000269" key="4">
    <source>
    </source>
</evidence>
<evidence type="ECO:0000269" key="5">
    <source>
    </source>
</evidence>
<evidence type="ECO:0000269" key="6">
    <source>
    </source>
</evidence>
<evidence type="ECO:0000269" key="7">
    <source>
    </source>
</evidence>
<evidence type="ECO:0000269" key="8">
    <source>
    </source>
</evidence>
<evidence type="ECO:0000269" key="9">
    <source>
    </source>
</evidence>
<evidence type="ECO:0000269" key="10">
    <source>
    </source>
</evidence>
<evidence type="ECO:0000303" key="11">
    <source>
    </source>
</evidence>
<evidence type="ECO:0000303" key="12">
    <source>
    </source>
</evidence>
<evidence type="ECO:0000303" key="13">
    <source>
    </source>
</evidence>
<evidence type="ECO:0000305" key="14"/>
<keyword id="KW-0002">3D-structure</keyword>
<keyword id="KW-0456">Lyase</keyword>
<keyword id="KW-0460">Magnesium</keyword>
<keyword id="KW-0479">Metal-binding</keyword>
<keyword id="KW-0843">Virulence</keyword>
<gene>
    <name type="primary">BOT2</name>
    <name type="synonym">CND15</name>
</gene>
<proteinExistence type="evidence at protein level"/>
<sequence>MAIPALEPQLHDADTSSNNMSSNSTDSGYDTNSTTPLEKSEKPNTQELKQQQLDPKRPPFVRVPDLFGSIMSTKPVVNPNYFAAKARGDRWIARVMNFNKAVAARNSKVDLCFLASMWAPDAPEDRLVMMLDWNHWVFLFDDQFDEGHLKEDPAAAAEEVKQTIAIMGGNAPRYTAESNPIRYVFQQCWDRLKAVSSQEMQQRWIDQHKRYFDQLLVQVDQQVGGENFTRDVEAYMDLRRGTIGVYPAISLSEYGAGVNVPQHVYDHPSLQECMKVSADLVTLVNDVLSYRKDLELGVDHNLMSLLMQRDNLSAQQAVDVIGDMVNECYRRWYLALAELPSYGEKIDYNVMKFVEICRAVAQGNLYWSFQTGRYLGPEGHEVHETGIMYLPPAANLVVA</sequence>
<dbReference type="EC" id="4.2.3.74" evidence="6 7"/>
<dbReference type="EMBL" id="AY277723">
    <property type="protein sequence ID" value="AAQ16575.1"/>
    <property type="molecule type" value="Genomic_DNA"/>
</dbReference>
<dbReference type="PDB" id="8H6Q">
    <property type="method" value="X-ray"/>
    <property type="resolution" value="2.00 A"/>
    <property type="chains" value="A/B/C/D=40-399"/>
</dbReference>
<dbReference type="PDB" id="8H6U">
    <property type="method" value="X-ray"/>
    <property type="resolution" value="2.78 A"/>
    <property type="chains" value="A/B/C/D=40-399"/>
</dbReference>
<dbReference type="PDBsum" id="8H6Q"/>
<dbReference type="PDBsum" id="8H6U"/>
<dbReference type="SMR" id="Q6WP50"/>
<dbReference type="KEGG" id="ag:AAQ16575"/>
<dbReference type="SABIO-RK" id="Q6WP50"/>
<dbReference type="GO" id="GO:0000287">
    <property type="term" value="F:magnesium ion binding"/>
    <property type="evidence" value="ECO:0000314"/>
    <property type="project" value="UniProtKB"/>
</dbReference>
<dbReference type="GO" id="GO:0010334">
    <property type="term" value="F:sesquiterpene synthase activity"/>
    <property type="evidence" value="ECO:0000314"/>
    <property type="project" value="UniProtKB"/>
</dbReference>
<dbReference type="GO" id="GO:0045338">
    <property type="term" value="P:farnesyl diphosphate metabolic process"/>
    <property type="evidence" value="ECO:0000314"/>
    <property type="project" value="UniProtKB"/>
</dbReference>
<dbReference type="GO" id="GO:0051762">
    <property type="term" value="P:sesquiterpene biosynthetic process"/>
    <property type="evidence" value="ECO:0000314"/>
    <property type="project" value="UniProtKB"/>
</dbReference>
<dbReference type="FunFam" id="1.10.600.10:FF:000066">
    <property type="entry name" value="Presilphiperfolan-8-beta-ol synthase"/>
    <property type="match status" value="1"/>
</dbReference>
<dbReference type="Gene3D" id="1.10.600.10">
    <property type="entry name" value="Farnesyl Diphosphate Synthase"/>
    <property type="match status" value="1"/>
</dbReference>
<dbReference type="InterPro" id="IPR008949">
    <property type="entry name" value="Isoprenoid_synthase_dom_sf"/>
</dbReference>
<dbReference type="InterPro" id="IPR034686">
    <property type="entry name" value="Terpene_cyclase-like_2"/>
</dbReference>
<dbReference type="PANTHER" id="PTHR35201:SF4">
    <property type="entry name" value="BETA-PINACENE SYNTHASE-RELATED"/>
    <property type="match status" value="1"/>
</dbReference>
<dbReference type="PANTHER" id="PTHR35201">
    <property type="entry name" value="TERPENE SYNTHASE"/>
    <property type="match status" value="1"/>
</dbReference>
<dbReference type="Pfam" id="PF19086">
    <property type="entry name" value="Terpene_syn_C_2"/>
    <property type="match status" value="1"/>
</dbReference>
<dbReference type="SFLD" id="SFLDS00005">
    <property type="entry name" value="Isoprenoid_Synthase_Type_I"/>
    <property type="match status" value="1"/>
</dbReference>
<dbReference type="SFLD" id="SFLDG01020">
    <property type="entry name" value="Terpene_Cyclase_Like_2"/>
    <property type="match status" value="1"/>
</dbReference>
<dbReference type="SUPFAM" id="SSF48576">
    <property type="entry name" value="Terpenoid synthases"/>
    <property type="match status" value="1"/>
</dbReference>
<protein>
    <recommendedName>
        <fullName evidence="13">Presilphiperfolan-8-beta-ol synthase</fullName>
        <shortName evidence="13">PSPS</shortName>
        <ecNumber evidence="6 7">4.2.3.74</ecNumber>
    </recommendedName>
    <alternativeName>
        <fullName evidence="12">Botrydial synthesis protein 2</fullName>
    </alternativeName>
    <alternativeName>
        <fullName evidence="11">Calcineurin-dependent protein 15</fullName>
    </alternativeName>
    <alternativeName>
        <fullName>Sesquiterpene cyclase BOT2</fullName>
    </alternativeName>
    <alternativeName>
        <fullName evidence="12">Sesquiterpene synthase BOT2</fullName>
    </alternativeName>
</protein>
<reference key="1">
    <citation type="journal article" date="2003" name="Mol. Microbiol.">
        <title>Cyclophilin A and calcineurin functions investigated by gene inactivation, cyclosporin A inhibition and cDNA arrays approaches in the phytopathogenic fungus Botrytis cinerea.</title>
        <authorList>
            <person name="Viaud M."/>
            <person name="Brunet-Simon A."/>
            <person name="Brygoo Y."/>
            <person name="Pradier J.-M."/>
            <person name="Levis C."/>
        </authorList>
    </citation>
    <scope>NUCLEOTIDE SEQUENCE [GENOMIC DNA]</scope>
    <scope>INDUCTION</scope>
    <source>
        <strain>T4</strain>
    </source>
</reference>
<reference key="2">
    <citation type="journal article" date="2005" name="Mol. Plant Microbe Interact.">
        <title>Functional analysis of the cytochrome P450 monooxygenase gene bcbot1 of Botrytis cinerea indicates that botrydial is a strain-specific virulence factor.</title>
        <authorList>
            <person name="Siewers V."/>
            <person name="Viaud M."/>
            <person name="Jimenez-Teja D."/>
            <person name="Collado I.G."/>
            <person name="Gronover C.S."/>
            <person name="Pradier J.M."/>
            <person name="Tudzynski B."/>
            <person name="Tudzynski P."/>
        </authorList>
    </citation>
    <scope>FUNCTION</scope>
</reference>
<reference key="3">
    <citation type="journal article" date="2008" name="ACS Chem. Biol.">
        <title>Sesquiterpene synthase from the botrydial biosynthetic gene cluster of the phytopathogen Botrytis cinerea.</title>
        <authorList>
            <person name="Pinedo C."/>
            <person name="Wang C.M."/>
            <person name="Pradier J.M."/>
            <person name="Dalmais B."/>
            <person name="Choquer M."/>
            <person name="Le Pecheur P."/>
            <person name="Morgant G."/>
            <person name="Collado I.G."/>
            <person name="Cane D.E."/>
            <person name="Viaud M."/>
        </authorList>
    </citation>
    <scope>FUNCTION</scope>
    <scope>INDUCTION</scope>
    <scope>IDENTIFICATION BY MASS SPECTROMETRY</scope>
    <scope>BIOPHYSICOCHEMICAL PROPERTIES</scope>
    <scope>PATHWAY</scope>
</reference>
<reference key="4">
    <citation type="journal article" date="2009" name="J. Am. Chem. Soc.">
        <title>Biosynthesis of the sesquiterpene botrydial in Botrytis cinerea. Mechanism and stereochemistry of the enzymatic formation of presilphiperfolan-8beta-ol.</title>
        <authorList>
            <person name="Wang C.M."/>
            <person name="Hopsn R."/>
            <person name="Lin X."/>
            <person name="Cane D.E."/>
        </authorList>
    </citation>
    <scope>FUNCTION</scope>
    <scope>CATALYTIC ACTIVITY</scope>
    <scope>PATHWAY</scope>
</reference>
<reference key="5">
    <citation type="journal article" date="2016" name="ACS Chem. Biol.">
        <title>Genetic and molecular basis of botrydial biosynthesis: connecting cytochrome P450-encoding genes to biosynthetic intermediates.</title>
        <authorList>
            <person name="Moraga J."/>
            <person name="Dalmais B."/>
            <person name="Izquierdo-Bueno I."/>
            <person name="Aleu J."/>
            <person name="Hanson J.R."/>
            <person name="Hernandez-Galan R."/>
            <person name="Viaud M."/>
            <person name="Collado I.G."/>
        </authorList>
    </citation>
    <scope>FUNCTION</scope>
</reference>
<reference key="6">
    <citation type="journal article" date="2016" name="Fungal Genet. Biol.">
        <title>The botrydial biosynthetic gene cluster of Botrytis cinerea displays a bipartite genomic structure and is positively regulated by the putative Zn(II)2Cys6 transcription factor BcBot6.</title>
        <authorList>
            <person name="Porquier A."/>
            <person name="Morgant G."/>
            <person name="Moraga J."/>
            <person name="Dalmais B."/>
            <person name="Luyten I."/>
            <person name="Simon A."/>
            <person name="Pradier J.M."/>
            <person name="Amselem J."/>
            <person name="Collado I.G."/>
            <person name="Viaud M."/>
        </authorList>
    </citation>
    <scope>FUNCTION</scope>
    <scope>INDUCTION</scope>
</reference>
<reference key="7">
    <citation type="journal article" date="2017" name="Org. Biomol. Chem.">
        <title>The formation of sesquiterpenoid presilphiperfolane and cameroonane metabolites in the Bcbot4 null mutant of Botrytis cinerea.</title>
        <authorList>
            <person name="Franco Dos Santos G."/>
            <person name="Moraga J."/>
            <person name="Takahashi J.A."/>
            <person name="Viaud M."/>
            <person name="Hanson J.R."/>
            <person name="Hernandez Galan R."/>
            <person name="Collado I.G."/>
        </authorList>
    </citation>
    <scope>FUNCTION</scope>
</reference>
<accession>Q6WP50</accession>
<feature type="chain" id="PRO_0000405531" description="Presilphiperfolan-8-beta-ol synthase">
    <location>
        <begin position="1"/>
        <end position="399"/>
    </location>
</feature>
<feature type="region of interest" description="Disordered" evidence="3">
    <location>
        <begin position="1"/>
        <end position="60"/>
    </location>
</feature>
<feature type="short sequence motif" description="DDXXD motif" evidence="14">
    <location>
        <begin position="141"/>
        <end position="145"/>
    </location>
</feature>
<feature type="compositionally biased region" description="Low complexity" evidence="3">
    <location>
        <begin position="15"/>
        <end position="27"/>
    </location>
</feature>
<feature type="compositionally biased region" description="Polar residues" evidence="3">
    <location>
        <begin position="28"/>
        <end position="37"/>
    </location>
</feature>
<feature type="binding site" evidence="2">
    <location>
        <position position="141"/>
    </location>
    <ligand>
        <name>Mg(2+)</name>
        <dbReference type="ChEBI" id="CHEBI:18420"/>
        <label>1</label>
    </ligand>
</feature>
<feature type="binding site" evidence="2">
    <location>
        <position position="141"/>
    </location>
    <ligand>
        <name>Mg(2+)</name>
        <dbReference type="ChEBI" id="CHEBI:18420"/>
        <label>2</label>
    </ligand>
</feature>
<feature type="binding site" evidence="2">
    <location>
        <position position="285"/>
    </location>
    <ligand>
        <name>Mg(2+)</name>
        <dbReference type="ChEBI" id="CHEBI:18420"/>
        <label>3</label>
    </ligand>
</feature>
<feature type="binding site" evidence="2">
    <location>
        <position position="289"/>
    </location>
    <ligand>
        <name>Mg(2+)</name>
        <dbReference type="ChEBI" id="CHEBI:18420"/>
        <label>3</label>
    </ligand>
</feature>
<feature type="binding site" evidence="2">
    <location>
        <position position="373"/>
    </location>
    <ligand>
        <name>(2E,6E)-farnesyl diphosphate</name>
        <dbReference type="ChEBI" id="CHEBI:175763"/>
    </ligand>
</feature>
<feature type="binding site" evidence="2">
    <location>
        <position position="374"/>
    </location>
    <ligand>
        <name>(2E,6E)-farnesyl diphosphate</name>
        <dbReference type="ChEBI" id="CHEBI:175763"/>
    </ligand>
</feature>
<comment type="function">
    <text evidence="4 5 6 7 8 9 10">Presilphiperfolan-8-beta-ol synthase; part of the gene cluster that mediates the biosynthesis of botrydial (PubMed:14651630, PubMed:19035644, PubMed:19476353). Botrydial is necessary for colonization of plant tissue by the T4 strain (PubMed:19035644). It is a strain-dependent virulence factor since highly aggressive strains like SAS56 or B05 still retain substantial virulence when botrydial synthesis is impaired, since they produce also botcinic acid (PubMed:15986930). The first step of botrydial biosynthesis is performed by the sesquiterpene synthase BOT2 which catalyzes the cyclization of farnesyl diphosphate (FPP) to presilphiperfolan-8-beta-ol (PSP) (PubMed:19035644, PubMed:19476353). The cytochrome P450 monooxygenase BOT4 then catalyzes the hydroxylation at C-4 to give a probotryane intermediate (PubMed:27529428, PubMed:28617493). Acetylation of the hydroxyl at C-4 is carried out by the acetyltransferase BOT5, followed by the combined action of the P450 monooxygenases BOT3 and BOT1, to yield finally the glycol, via the regio- and stereospecific hydroxylations at C-10 and C-15 of the probotryane intermediates, respectively (PubMed:15986930, PubMed:27529428). The cleavage of the C10-C15 bond of probotryane skeleton is an intriguing and chemically important reaction, which could be mediated by some of the monooxygenases or by a combination of them (PubMed:27529428). It is possible that either BOT3 or BOT1 would oxidize either the 10- or the 15-hydroxy group to the hydroperoxide derivative, which would then undergo heterolytic fragmentation to give the dialdehyde botrydial (PubMed:27529428). Finally, the dehydrogenase BOT7 might be involved in the conversion of botrydial to dihydrobotrydial (PubMed:27721016).</text>
</comment>
<comment type="catalytic activity">
    <reaction evidence="6 7">
        <text>(2E,6E)-farnesyl diphosphate + H2O = presilphiperfolan-8beta-ol + diphosphate</text>
        <dbReference type="Rhea" id="RHEA:27954"/>
        <dbReference type="ChEBI" id="CHEBI:15377"/>
        <dbReference type="ChEBI" id="CHEBI:33019"/>
        <dbReference type="ChEBI" id="CHEBI:60968"/>
        <dbReference type="ChEBI" id="CHEBI:175763"/>
        <dbReference type="EC" id="4.2.3.74"/>
    </reaction>
</comment>
<comment type="cofactor">
    <cofactor evidence="1">
        <name>Mg(2+)</name>
        <dbReference type="ChEBI" id="CHEBI:18420"/>
    </cofactor>
    <text evidence="1">Binds 3 Mg(2+) ions per subunit.</text>
</comment>
<comment type="biophysicochemical properties">
    <kinetics>
        <KM evidence="6">6.04 uM for farnesyl diphosphate</KM>
    </kinetics>
</comment>
<comment type="pathway">
    <text evidence="6 7">Secondary metabolite biosynthesis.</text>
</comment>
<comment type="induction">
    <text evidence="4 6 9">The botrydial biosynthesis cluster genes are co-regulated by the Ca(2+)/calcineurin signal transduction pathway, which is under the control of the alpha subunit BCG1 of a heterotrimeric G protein (PubMed:14651630, PubMed:19035644). Expression of the cluster is also positively regulated by the cluster-specific transcription factor BOT6 (PubMed:27721016).</text>
</comment>
<comment type="domain">
    <text evidence="14">The Asp-Asp-Xaa-Xaa-Asp/Glu (DDXXD/E) motif is important for the catalytic activity, presumably through binding to Mg(2+).</text>
</comment>
<comment type="similarity">
    <text evidence="14">Belongs to the terpene synthase family.</text>
</comment>